<evidence type="ECO:0000269" key="1">
    <source>
    </source>
</evidence>
<evidence type="ECO:0000269" key="2">
    <source>
    </source>
</evidence>
<evidence type="ECO:0000269" key="3">
    <source>
    </source>
</evidence>
<evidence type="ECO:0000269" key="4">
    <source>
    </source>
</evidence>
<evidence type="ECO:0000269" key="5">
    <source>
    </source>
</evidence>
<evidence type="ECO:0000269" key="6">
    <source>
    </source>
</evidence>
<evidence type="ECO:0000269" key="7">
    <source>
    </source>
</evidence>
<evidence type="ECO:0000269" key="8">
    <source>
    </source>
</evidence>
<evidence type="ECO:0000269" key="9">
    <source>
    </source>
</evidence>
<evidence type="ECO:0000303" key="10">
    <source>
    </source>
</evidence>
<evidence type="ECO:0000305" key="11"/>
<keyword id="KW-0143">Chaperone</keyword>
<keyword id="KW-0963">Cytoplasm</keyword>
<keyword id="KW-1185">Reference proteome</keyword>
<keyword id="KW-0690">Ribosome biogenesis</keyword>
<keyword id="KW-0694">RNA-binding</keyword>
<keyword id="KW-0698">rRNA processing</keyword>
<keyword id="KW-0699">rRNA-binding</keyword>
<protein>
    <recommendedName>
        <fullName>Ribosome maturation factor RimM</fullName>
    </recommendedName>
    <alternativeName>
        <fullName evidence="10">21K</fullName>
    </alternativeName>
</protein>
<dbReference type="EMBL" id="X01818">
    <property type="status" value="NOT_ANNOTATED_CDS"/>
    <property type="molecule type" value="Genomic_DNA"/>
</dbReference>
<dbReference type="EMBL" id="U00096">
    <property type="protein sequence ID" value="AAC75657.2"/>
    <property type="molecule type" value="Genomic_DNA"/>
</dbReference>
<dbReference type="EMBL" id="AP009048">
    <property type="protein sequence ID" value="BAA16493.2"/>
    <property type="molecule type" value="Genomic_DNA"/>
</dbReference>
<dbReference type="PIR" id="C65039">
    <property type="entry name" value="C65039"/>
</dbReference>
<dbReference type="RefSeq" id="NP_417099.4">
    <property type="nucleotide sequence ID" value="NC_000913.3"/>
</dbReference>
<dbReference type="RefSeq" id="WP_000043335.1">
    <property type="nucleotide sequence ID" value="NZ_STEB01000040.1"/>
</dbReference>
<dbReference type="SMR" id="P0A7X6"/>
<dbReference type="BioGRID" id="4263071">
    <property type="interactions" value="84"/>
</dbReference>
<dbReference type="BioGRID" id="851436">
    <property type="interactions" value="6"/>
</dbReference>
<dbReference type="FunCoup" id="P0A7X6">
    <property type="interactions" value="546"/>
</dbReference>
<dbReference type="IntAct" id="P0A7X6">
    <property type="interactions" value="7"/>
</dbReference>
<dbReference type="STRING" id="511145.b2608"/>
<dbReference type="jPOST" id="P0A7X6"/>
<dbReference type="PaxDb" id="511145-b2608"/>
<dbReference type="EnsemblBacteria" id="AAC75657">
    <property type="protein sequence ID" value="AAC75657"/>
    <property type="gene ID" value="b2608"/>
</dbReference>
<dbReference type="GeneID" id="93774458"/>
<dbReference type="GeneID" id="947101"/>
<dbReference type="KEGG" id="ecj:JW5413"/>
<dbReference type="KEGG" id="eco:b2608"/>
<dbReference type="KEGG" id="ecoc:C3026_14440"/>
<dbReference type="PATRIC" id="fig|1411691.4.peg.4131"/>
<dbReference type="EchoBASE" id="EB1142"/>
<dbReference type="eggNOG" id="COG0806">
    <property type="taxonomic scope" value="Bacteria"/>
</dbReference>
<dbReference type="HOGENOM" id="CLU_077636_1_0_6"/>
<dbReference type="InParanoid" id="P0A7X6"/>
<dbReference type="OMA" id="IKVDWDP"/>
<dbReference type="OrthoDB" id="9783509at2"/>
<dbReference type="PhylomeDB" id="P0A7X6"/>
<dbReference type="BioCyc" id="EcoCyc:EG11153-MONOMER"/>
<dbReference type="PRO" id="PR:P0A7X6"/>
<dbReference type="Proteomes" id="UP000000625">
    <property type="component" value="Chromosome"/>
</dbReference>
<dbReference type="GO" id="GO:0005829">
    <property type="term" value="C:cytosol"/>
    <property type="evidence" value="ECO:0000314"/>
    <property type="project" value="EcoCyc"/>
</dbReference>
<dbReference type="GO" id="GO:0005840">
    <property type="term" value="C:ribosome"/>
    <property type="evidence" value="ECO:0007669"/>
    <property type="project" value="InterPro"/>
</dbReference>
<dbReference type="GO" id="GO:0043022">
    <property type="term" value="F:ribosome binding"/>
    <property type="evidence" value="ECO:0007669"/>
    <property type="project" value="InterPro"/>
</dbReference>
<dbReference type="GO" id="GO:0019843">
    <property type="term" value="F:rRNA binding"/>
    <property type="evidence" value="ECO:0007669"/>
    <property type="project" value="UniProtKB-KW"/>
</dbReference>
<dbReference type="GO" id="GO:0030490">
    <property type="term" value="P:maturation of SSU-rRNA"/>
    <property type="evidence" value="ECO:0000315"/>
    <property type="project" value="EcoliWiki"/>
</dbReference>
<dbReference type="GO" id="GO:0000028">
    <property type="term" value="P:ribosomal small subunit assembly"/>
    <property type="evidence" value="ECO:0000315"/>
    <property type="project" value="EcoCyc"/>
</dbReference>
<dbReference type="FunFam" id="2.30.30.240:FF:000001">
    <property type="entry name" value="Ribosome maturation factor RimM"/>
    <property type="match status" value="1"/>
</dbReference>
<dbReference type="FunFam" id="2.40.30.60:FF:000001">
    <property type="entry name" value="Ribosome maturation factor RimM"/>
    <property type="match status" value="1"/>
</dbReference>
<dbReference type="Gene3D" id="2.30.30.240">
    <property type="entry name" value="PRC-barrel domain"/>
    <property type="match status" value="1"/>
</dbReference>
<dbReference type="Gene3D" id="2.40.30.60">
    <property type="entry name" value="RimM"/>
    <property type="match status" value="1"/>
</dbReference>
<dbReference type="HAMAP" id="MF_00014">
    <property type="entry name" value="Ribosome_mat_RimM"/>
    <property type="match status" value="1"/>
</dbReference>
<dbReference type="InterPro" id="IPR011033">
    <property type="entry name" value="PRC_barrel-like_sf"/>
</dbReference>
<dbReference type="InterPro" id="IPR056792">
    <property type="entry name" value="PRC_RimM"/>
</dbReference>
<dbReference type="InterPro" id="IPR011961">
    <property type="entry name" value="RimM"/>
</dbReference>
<dbReference type="InterPro" id="IPR002676">
    <property type="entry name" value="RimM_N"/>
</dbReference>
<dbReference type="InterPro" id="IPR036976">
    <property type="entry name" value="RimM_N_sf"/>
</dbReference>
<dbReference type="InterPro" id="IPR009000">
    <property type="entry name" value="Transl_B-barrel_sf"/>
</dbReference>
<dbReference type="NCBIfam" id="TIGR02273">
    <property type="entry name" value="16S_RimM"/>
    <property type="match status" value="1"/>
</dbReference>
<dbReference type="PANTHER" id="PTHR33692">
    <property type="entry name" value="RIBOSOME MATURATION FACTOR RIMM"/>
    <property type="match status" value="1"/>
</dbReference>
<dbReference type="PANTHER" id="PTHR33692:SF1">
    <property type="entry name" value="RIBOSOME MATURATION FACTOR RIMM"/>
    <property type="match status" value="1"/>
</dbReference>
<dbReference type="Pfam" id="PF24986">
    <property type="entry name" value="PRC_RimM"/>
    <property type="match status" value="1"/>
</dbReference>
<dbReference type="Pfam" id="PF01782">
    <property type="entry name" value="RimM"/>
    <property type="match status" value="1"/>
</dbReference>
<dbReference type="SUPFAM" id="SSF50346">
    <property type="entry name" value="PRC-barrel domain"/>
    <property type="match status" value="1"/>
</dbReference>
<dbReference type="SUPFAM" id="SSF50447">
    <property type="entry name" value="Translation proteins"/>
    <property type="match status" value="1"/>
</dbReference>
<name>RIMM_ECOLI</name>
<comment type="function">
    <text evidence="1 2 4 5 6 8 9">One of at least 4 proteins (Era, RbfA, RimM and RsgA/YjeQ) that assist in the late assembly stage of the 30S ribosomal subunit. An accessory protein needed during the final step in assembly of the 30S ribosomal subunit, for assembly of the head region (the 16S rRNA 3' domain) (PubMed:11514519, PubMed:15496525, PubMed:20188109, PubMed:23611982, PubMed:27382067). It may act while Era is associated and before RimP in 30S subunit assembly (PubMed:20188109). Essential for efficient processing of 16S rRNA; a deletion mutant accumulates 17S rRNA (PubMed:9422595). Deletions do not assemble the head-associated ribosomal proteins correctly (PubMed:23611982, PubMed:27382067). May be needed both before and after RbfA during the maturation of 16S rRNA. It has affinity for free ribosomal 30S subunits but not for 70S ribosomes (PubMed:9226267).</text>
</comment>
<comment type="subunit">
    <text evidence="2 8">Binds 30S ribosomal subunit but not 70S ribosomes (PubMed:9226267). Binds ribosomal protein uS19 and probably 16S rRNA (PubMed:15496525).</text>
</comment>
<comment type="subcellular location">
    <subcellularLocation>
        <location evidence="1 8">Cytoplasm</location>
    </subcellularLocation>
    <text evidence="8">Binds 30S subunit, but not 70S ribosomes (PubMed:9226267).</text>
</comment>
<comment type="induction">
    <text evidence="3 7">Translation of the mRNA is repressed by a stem-loop in the first 150 nucleotides of its own transcript (PubMed:1569581). Part of the rpsP-rimM-trmD-rplS operon (PubMed:1569581, PubMed:6357787).</text>
</comment>
<comment type="domain">
    <text evidence="2">The PRC barrel domain binds ribosomal protein uS19.</text>
</comment>
<comment type="disruption phenotype">
    <text evidence="2 5 6 8 9">Disruption causes slow growth, incomplete processing of 17S rRNA, accumulation of 30S and 50S subunits and decreased translational efficiency (PubMed:23611982, PubMed:9226267). Altered levels of ribosomal proteins in 30S subunits; uS2, uS3, uS14 and bS21 are severely depleted, uS5, uS7 and uS11 are decreased, distortion of rRNA helix 44 near the decoding center (PubMed:23611982). Slightly different results show ribosomal proteins uS2 and bS21 are not found in 30S subunits, decreased uS3, uS13 and uS14 in 30S subunits (PubMed:27382067). Deletion is partially suppressed by mutations in rpsM (uS13) (PubMed:9226267, PubMed:15496525), by a mutation in rpsS (uS19) (PubMed:15496525) and also by increased expression of RbfA (PubMed:9422595). Suppressors due to in-frame fusions with rpsP, the upstream gene for ribosomal protein bS16 have been isolated (PubMed:11514519). Suppression is probably due to increased expression of RimM; the fusion proteins are found in translationally active 70S ribosomes (PubMed:11514519).</text>
</comment>
<comment type="similarity">
    <text evidence="11">Belongs to the RimM family.</text>
</comment>
<reference key="1">
    <citation type="journal article" date="1983" name="EMBO J.">
        <title>The nucleotide sequence of an Escherichia coli operon containing genes for the tRNA(m1G)methyltransferase, the ribosomal proteins S16 and L19 and a 21-K polypeptide.</title>
        <authorList>
            <person name="Bystroem A.S."/>
            <person name="Hjalmarsson K.J."/>
            <person name="Wikstroem P.M."/>
            <person name="Bjoerk G.R."/>
        </authorList>
    </citation>
    <scope>NUCLEOTIDE SEQUENCE [GENOMIC DNA]</scope>
    <scope>OPERON STRUCTURE</scope>
    <source>
        <strain>K12</strain>
    </source>
</reference>
<reference key="2">
    <citation type="journal article" date="1997" name="DNA Res.">
        <title>Construction of a contiguous 874-kb sequence of the Escherichia coli-K12 genome corresponding to 50.0-68.8 min on the linkage map and analysis of its sequence features.</title>
        <authorList>
            <person name="Yamamoto Y."/>
            <person name="Aiba H."/>
            <person name="Baba T."/>
            <person name="Hayashi K."/>
            <person name="Inada T."/>
            <person name="Isono K."/>
            <person name="Itoh T."/>
            <person name="Kimura S."/>
            <person name="Kitagawa M."/>
            <person name="Makino K."/>
            <person name="Miki T."/>
            <person name="Mitsuhashi N."/>
            <person name="Mizobuchi K."/>
            <person name="Mori H."/>
            <person name="Nakade S."/>
            <person name="Nakamura Y."/>
            <person name="Nashimoto H."/>
            <person name="Oshima T."/>
            <person name="Oyama S."/>
            <person name="Saito N."/>
            <person name="Sampei G."/>
            <person name="Satoh Y."/>
            <person name="Sivasundaram S."/>
            <person name="Tagami H."/>
            <person name="Takahashi H."/>
            <person name="Takeda J."/>
            <person name="Takemoto K."/>
            <person name="Uehara K."/>
            <person name="Wada C."/>
            <person name="Yamagata S."/>
            <person name="Horiuchi T."/>
        </authorList>
    </citation>
    <scope>NUCLEOTIDE SEQUENCE [LARGE SCALE GENOMIC DNA]</scope>
    <source>
        <strain>K12 / W3110 / ATCC 27325 / DSM 5911</strain>
    </source>
</reference>
<reference key="3">
    <citation type="journal article" date="1997" name="Science">
        <title>The complete genome sequence of Escherichia coli K-12.</title>
        <authorList>
            <person name="Blattner F.R."/>
            <person name="Plunkett G. III"/>
            <person name="Bloch C.A."/>
            <person name="Perna N.T."/>
            <person name="Burland V."/>
            <person name="Riley M."/>
            <person name="Collado-Vides J."/>
            <person name="Glasner J.D."/>
            <person name="Rode C.K."/>
            <person name="Mayhew G.F."/>
            <person name="Gregor J."/>
            <person name="Davis N.W."/>
            <person name="Kirkpatrick H.A."/>
            <person name="Goeden M.A."/>
            <person name="Rose D.J."/>
            <person name="Mau B."/>
            <person name="Shao Y."/>
        </authorList>
    </citation>
    <scope>NUCLEOTIDE SEQUENCE [LARGE SCALE GENOMIC DNA]</scope>
    <source>
        <strain>K12 / MG1655 / ATCC 47076</strain>
    </source>
</reference>
<reference key="4">
    <citation type="journal article" date="2006" name="Mol. Syst. Biol.">
        <title>Highly accurate genome sequences of Escherichia coli K-12 strains MG1655 and W3110.</title>
        <authorList>
            <person name="Hayashi K."/>
            <person name="Morooka N."/>
            <person name="Yamamoto Y."/>
            <person name="Fujita K."/>
            <person name="Isono K."/>
            <person name="Choi S."/>
            <person name="Ohtsubo E."/>
            <person name="Baba T."/>
            <person name="Wanner B.L."/>
            <person name="Mori H."/>
            <person name="Horiuchi T."/>
        </authorList>
    </citation>
    <scope>NUCLEOTIDE SEQUENCE [LARGE SCALE GENOMIC DNA]</scope>
    <source>
        <strain>K12 / W3110 / ATCC 27325 / DSM 5911</strain>
    </source>
</reference>
<reference key="5">
    <citation type="journal article" date="1992" name="J. Mol. Biol.">
        <title>Importance of mRNA folding and start codon accessibility in the expression of genes in a ribosomal protein operon of Escherichia coli.</title>
        <authorList>
            <person name="Wikstroem P.M."/>
            <person name="Lind L.K."/>
            <person name="Berg D.E."/>
            <person name="Bjoerk G.R."/>
        </authorList>
    </citation>
    <scope>CONTROL OF TRANSLATION</scope>
    <scope>OPERON STRUCTURE</scope>
</reference>
<reference key="6">
    <citation type="journal article" date="1997" name="J. Bacteriol.">
        <title>A novel ribosome-associated protein is important for efficient translation in Escherichia coli.</title>
        <authorList>
            <person name="Bylund G.O."/>
            <person name="Persson B.C."/>
            <person name="Lundberg L.A."/>
            <person name="Wikstroem P.M."/>
        </authorList>
    </citation>
    <scope>FUNCTION</scope>
    <scope>SUBUNIT</scope>
    <scope>ASSOCIATION WITH 30S RIBOSOMAL SUBUNIT</scope>
    <scope>SUBCELLULAR LOCATION</scope>
    <scope>DISRUPTION PHENOTYPE</scope>
    <scope>PARTIAL SUPPRESSION BY US13 MUTATIONS</scope>
    <source>
        <strain>MW100</strain>
    </source>
</reference>
<reference key="7">
    <citation type="journal article" date="1998" name="J. Bacteriol.">
        <title>RimM and RbfA are essential for efficient processing of 16S rRNA in Escherichia coli.</title>
        <authorList>
            <person name="Bylund G.O."/>
            <person name="Wipemo L.C."/>
            <person name="Lundberg L.A."/>
            <person name="Wikstroem P.M."/>
        </authorList>
    </citation>
    <scope>FUNCTION</scope>
    <scope>DISRUPTION PHENOTYPE</scope>
    <scope>PARTIAL SUPPRESSION BY RBFA OVEREXPRESSION</scope>
    <source>
        <strain>MW100</strain>
    </source>
</reference>
<reference key="8">
    <citation type="journal article" date="2001" name="J. Bacteriol.">
        <title>Hybrid protein between ribosomal protein S16 and RimM of Escherichia coli retains the ribosome maturation function of both proteins.</title>
        <authorList>
            <person name="Loevgren J.M."/>
            <person name="Wikstroem P.M."/>
        </authorList>
    </citation>
    <scope>FUNCTION</scope>
    <scope>SUBCELLULAR LOCATION</scope>
    <scope>FUSION WITH RIBOSOMAL PROTEIN BS16</scope>
    <scope>MUTAGENESIS OF 106-TYR-TYR-107</scope>
    <source>
        <strain>MW100</strain>
    </source>
</reference>
<reference key="9">
    <citation type="journal article" date="2004" name="RNA">
        <title>The PRC-barrel domain of the ribosome maturation protein RimM mediates binding to ribosomal protein S19 in the 30S ribosomal subunits.</title>
        <authorList>
            <person name="Loevgren J.M."/>
            <person name="Bylund G.O."/>
            <person name="Srivastava M.K."/>
            <person name="Lundberg L.A.C."/>
            <person name="Persson O.P."/>
            <person name="Wingsle G."/>
            <person name="Wikstroem P.M."/>
        </authorList>
    </citation>
    <scope>INTERACTION WITH RIBOSOMAL PROTEIN US19</scope>
    <scope>DOMAIN</scope>
    <source>
        <strain>MW100</strain>
    </source>
</reference>
<reference key="10">
    <citation type="journal article" date="2010" name="J. Mol. Biol.">
        <title>The effect of ribosome assembly cofactors on in vitro 30S subunit reconstitution.</title>
        <authorList>
            <person name="Bunner A.E."/>
            <person name="Nord S."/>
            <person name="Wikstrom P.M."/>
            <person name="Williamson J.R."/>
        </authorList>
    </citation>
    <scope>FUNCTION IN 30S SUBUNIT PROTEIN ASSEMBLY</scope>
</reference>
<reference key="11">
    <citation type="journal article" date="2013" name="RNA">
        <title>Escherichia coli rimM and yjeQ null strains accumulate immature 30S subunits of similar structure and protein complement.</title>
        <authorList>
            <person name="Leong V."/>
            <person name="Kent M."/>
            <person name="Jomaa A."/>
            <person name="Ortega J."/>
        </authorList>
    </citation>
    <scope>FUNCTION</scope>
    <scope>DISRUPTION PHENOTYPE</scope>
    <scope>STRUCTURE BY ELECTRON MICROSCOPY (15.0 ANGSTROMS)</scope>
    <source>
        <strain>K12 / BW25113</strain>
    </source>
</reference>
<reference key="12">
    <citation type="journal article" date="2016" name="Nucleic Acids Res.">
        <title>Binding properties of YjeQ (RsgA), RbfA, RimM and Era to assembly intermediates of the 30S subunit.</title>
        <authorList>
            <person name="Thurlow B."/>
            <person name="Davis J.H."/>
            <person name="Leong V."/>
            <person name="Moraes T.F."/>
            <person name="Williamson J.R."/>
            <person name="Ortega J."/>
        </authorList>
    </citation>
    <scope>FUNCTION</scope>
    <scope>DISRUPTION PHENOTYPE</scope>
    <source>
        <strain>K12 / BW25113</strain>
    </source>
</reference>
<proteinExistence type="evidence at protein level"/>
<sequence length="182" mass="20605">MSKQLTAQAPVDPIVLGKMGSSYGIRGWLRVFSSTEDAESIFDYQPWFIQKAGQWQQVQLESWKHHNQDMIIKLKGVDDRDAANLLTNCEIVVDSSQLPQLEEGDYYWKDLMGCQVVTTEGYDLGKVVDMMETGSNDVLVIKANLKDAFGIKERLVPFLDGQVIKKVDLTTRSIEVDWDPGF</sequence>
<gene>
    <name type="primary">rimM</name>
    <name evidence="10" type="synonym">yfjA</name>
    <name type="ordered locus">b2608</name>
    <name type="ordered locus">JW5413</name>
</gene>
<accession>P0A7X6</accession>
<accession>P21504</accession>
<accession>Q8X9D2</accession>
<organism>
    <name type="scientific">Escherichia coli (strain K12)</name>
    <dbReference type="NCBI Taxonomy" id="83333"/>
    <lineage>
        <taxon>Bacteria</taxon>
        <taxon>Pseudomonadati</taxon>
        <taxon>Pseudomonadota</taxon>
        <taxon>Gammaproteobacteria</taxon>
        <taxon>Enterobacterales</taxon>
        <taxon>Enterobacteriaceae</taxon>
        <taxon>Escherichia</taxon>
    </lineage>
</organism>
<feature type="chain" id="PRO_0000163286" description="Ribosome maturation factor RimM">
    <location>
        <begin position="1"/>
        <end position="182"/>
    </location>
</feature>
<feature type="domain" description="PRC barrel" evidence="2">
    <location>
        <begin position="103"/>
        <end position="182"/>
    </location>
</feature>
<feature type="mutagenesis site" description="3-fold decreased growth rate; loss of association with 30S ribosomal subunit; loss of interaction with uS19." evidence="1">
    <original>YY</original>
    <variation>AA</variation>
    <location>
        <begin position="106"/>
        <end position="107"/>
    </location>
</feature>